<feature type="chain" id="PRO_1000195690" description="Large ribosomal subunit protein uL11">
    <location>
        <begin position="1"/>
        <end position="145"/>
    </location>
</feature>
<name>RL11_PORG3</name>
<sequence>MAKEVAGQIKLQIKGGAANPSPPVGPALGAKGINIMEFCKQFNARTQDKAGKVLPVVITYYADKSFDFIVKTPPVAIQLLEASKQKSGSAEPNRKKVAEITWEQVRTIAEDKLVDLNCFDIKAAMKMVAGTARSMGIAIKGDFPE</sequence>
<proteinExistence type="inferred from homology"/>
<keyword id="KW-0488">Methylation</keyword>
<keyword id="KW-0687">Ribonucleoprotein</keyword>
<keyword id="KW-0689">Ribosomal protein</keyword>
<keyword id="KW-0694">RNA-binding</keyword>
<keyword id="KW-0699">rRNA-binding</keyword>
<gene>
    <name evidence="1" type="primary">rplK</name>
    <name type="ordered locus">PGN_1575</name>
</gene>
<accession>B2RL49</accession>
<reference key="1">
    <citation type="journal article" date="2008" name="DNA Res.">
        <title>Determination of the genome sequence of Porphyromonas gingivalis strain ATCC 33277 and genomic comparison with strain W83 revealed extensive genome rearrangements in P. gingivalis.</title>
        <authorList>
            <person name="Naito M."/>
            <person name="Hirakawa H."/>
            <person name="Yamashita A."/>
            <person name="Ohara N."/>
            <person name="Shoji M."/>
            <person name="Yukitake H."/>
            <person name="Nakayama K."/>
            <person name="Toh H."/>
            <person name="Yoshimura F."/>
            <person name="Kuhara S."/>
            <person name="Hattori M."/>
            <person name="Hayashi T."/>
            <person name="Nakayama K."/>
        </authorList>
    </citation>
    <scope>NUCLEOTIDE SEQUENCE [LARGE SCALE GENOMIC DNA]</scope>
    <source>
        <strain>ATCC 33277 / DSM 20709 / CIP 103683 / JCM 12257 / NCTC 11834 / 2561</strain>
    </source>
</reference>
<organism>
    <name type="scientific">Porphyromonas gingivalis (strain ATCC 33277 / DSM 20709 / CIP 103683 / JCM 12257 / NCTC 11834 / 2561)</name>
    <dbReference type="NCBI Taxonomy" id="431947"/>
    <lineage>
        <taxon>Bacteria</taxon>
        <taxon>Pseudomonadati</taxon>
        <taxon>Bacteroidota</taxon>
        <taxon>Bacteroidia</taxon>
        <taxon>Bacteroidales</taxon>
        <taxon>Porphyromonadaceae</taxon>
        <taxon>Porphyromonas</taxon>
    </lineage>
</organism>
<protein>
    <recommendedName>
        <fullName evidence="1">Large ribosomal subunit protein uL11</fullName>
    </recommendedName>
    <alternativeName>
        <fullName evidence="2">50S ribosomal protein L11</fullName>
    </alternativeName>
</protein>
<dbReference type="EMBL" id="AP009380">
    <property type="protein sequence ID" value="BAG34094.1"/>
    <property type="molecule type" value="Genomic_DNA"/>
</dbReference>
<dbReference type="RefSeq" id="WP_010955999.1">
    <property type="nucleotide sequence ID" value="NZ_CP025930.1"/>
</dbReference>
<dbReference type="SMR" id="B2RL49"/>
<dbReference type="GeneID" id="29256749"/>
<dbReference type="KEGG" id="pgn:PGN_1575"/>
<dbReference type="eggNOG" id="COG0080">
    <property type="taxonomic scope" value="Bacteria"/>
</dbReference>
<dbReference type="HOGENOM" id="CLU_074237_2_1_10"/>
<dbReference type="OrthoDB" id="9802408at2"/>
<dbReference type="BioCyc" id="PGIN431947:G1G2V-1775-MONOMER"/>
<dbReference type="Proteomes" id="UP000008842">
    <property type="component" value="Chromosome"/>
</dbReference>
<dbReference type="GO" id="GO:0022625">
    <property type="term" value="C:cytosolic large ribosomal subunit"/>
    <property type="evidence" value="ECO:0007669"/>
    <property type="project" value="TreeGrafter"/>
</dbReference>
<dbReference type="GO" id="GO:0070180">
    <property type="term" value="F:large ribosomal subunit rRNA binding"/>
    <property type="evidence" value="ECO:0007669"/>
    <property type="project" value="UniProtKB-UniRule"/>
</dbReference>
<dbReference type="GO" id="GO:0003735">
    <property type="term" value="F:structural constituent of ribosome"/>
    <property type="evidence" value="ECO:0007669"/>
    <property type="project" value="InterPro"/>
</dbReference>
<dbReference type="GO" id="GO:0006412">
    <property type="term" value="P:translation"/>
    <property type="evidence" value="ECO:0007669"/>
    <property type="project" value="UniProtKB-UniRule"/>
</dbReference>
<dbReference type="CDD" id="cd00349">
    <property type="entry name" value="Ribosomal_L11"/>
    <property type="match status" value="1"/>
</dbReference>
<dbReference type="FunFam" id="1.10.10.250:FF:000001">
    <property type="entry name" value="50S ribosomal protein L11"/>
    <property type="match status" value="1"/>
</dbReference>
<dbReference type="FunFam" id="3.30.1550.10:FF:000001">
    <property type="entry name" value="50S ribosomal protein L11"/>
    <property type="match status" value="1"/>
</dbReference>
<dbReference type="Gene3D" id="1.10.10.250">
    <property type="entry name" value="Ribosomal protein L11, C-terminal domain"/>
    <property type="match status" value="1"/>
</dbReference>
<dbReference type="Gene3D" id="3.30.1550.10">
    <property type="entry name" value="Ribosomal protein L11/L12, N-terminal domain"/>
    <property type="match status" value="1"/>
</dbReference>
<dbReference type="HAMAP" id="MF_00736">
    <property type="entry name" value="Ribosomal_uL11"/>
    <property type="match status" value="1"/>
</dbReference>
<dbReference type="InterPro" id="IPR000911">
    <property type="entry name" value="Ribosomal_uL11"/>
</dbReference>
<dbReference type="InterPro" id="IPR006519">
    <property type="entry name" value="Ribosomal_uL11_bac-typ"/>
</dbReference>
<dbReference type="InterPro" id="IPR020783">
    <property type="entry name" value="Ribosomal_uL11_C"/>
</dbReference>
<dbReference type="InterPro" id="IPR036769">
    <property type="entry name" value="Ribosomal_uL11_C_sf"/>
</dbReference>
<dbReference type="InterPro" id="IPR020785">
    <property type="entry name" value="Ribosomal_uL11_CS"/>
</dbReference>
<dbReference type="InterPro" id="IPR020784">
    <property type="entry name" value="Ribosomal_uL11_N"/>
</dbReference>
<dbReference type="InterPro" id="IPR036796">
    <property type="entry name" value="Ribosomal_uL11_N_sf"/>
</dbReference>
<dbReference type="NCBIfam" id="TIGR01632">
    <property type="entry name" value="L11_bact"/>
    <property type="match status" value="1"/>
</dbReference>
<dbReference type="PANTHER" id="PTHR11661">
    <property type="entry name" value="60S RIBOSOMAL PROTEIN L12"/>
    <property type="match status" value="1"/>
</dbReference>
<dbReference type="PANTHER" id="PTHR11661:SF1">
    <property type="entry name" value="LARGE RIBOSOMAL SUBUNIT PROTEIN UL11M"/>
    <property type="match status" value="1"/>
</dbReference>
<dbReference type="Pfam" id="PF00298">
    <property type="entry name" value="Ribosomal_L11"/>
    <property type="match status" value="1"/>
</dbReference>
<dbReference type="Pfam" id="PF03946">
    <property type="entry name" value="Ribosomal_L11_N"/>
    <property type="match status" value="1"/>
</dbReference>
<dbReference type="SMART" id="SM00649">
    <property type="entry name" value="RL11"/>
    <property type="match status" value="1"/>
</dbReference>
<dbReference type="SUPFAM" id="SSF54747">
    <property type="entry name" value="Ribosomal L11/L12e N-terminal domain"/>
    <property type="match status" value="1"/>
</dbReference>
<dbReference type="SUPFAM" id="SSF46906">
    <property type="entry name" value="Ribosomal protein L11, C-terminal domain"/>
    <property type="match status" value="1"/>
</dbReference>
<dbReference type="PROSITE" id="PS00359">
    <property type="entry name" value="RIBOSOMAL_L11"/>
    <property type="match status" value="1"/>
</dbReference>
<comment type="function">
    <text evidence="1">Forms part of the ribosomal stalk which helps the ribosome interact with GTP-bound translation factors.</text>
</comment>
<comment type="subunit">
    <text evidence="1">Part of the ribosomal stalk of the 50S ribosomal subunit. Interacts with L10 and the large rRNA to form the base of the stalk. L10 forms an elongated spine to which L12 dimers bind in a sequential fashion forming a multimeric L10(L12)X complex.</text>
</comment>
<comment type="PTM">
    <text evidence="1">One or more lysine residues are methylated.</text>
</comment>
<comment type="similarity">
    <text evidence="1">Belongs to the universal ribosomal protein uL11 family.</text>
</comment>
<evidence type="ECO:0000255" key="1">
    <source>
        <dbReference type="HAMAP-Rule" id="MF_00736"/>
    </source>
</evidence>
<evidence type="ECO:0000305" key="2"/>